<accession>B7GTL2</accession>
<accession>E8MLR3</accession>
<comment type="function">
    <text evidence="1">Catalyzes the NADPH-dependent reduction of L-glutamate 5-phosphate into L-glutamate 5-semialdehyde and phosphate. The product spontaneously undergoes cyclization to form 1-pyrroline-5-carboxylate.</text>
</comment>
<comment type="catalytic activity">
    <reaction evidence="1">
        <text>L-glutamate 5-semialdehyde + phosphate + NADP(+) = L-glutamyl 5-phosphate + NADPH + H(+)</text>
        <dbReference type="Rhea" id="RHEA:19541"/>
        <dbReference type="ChEBI" id="CHEBI:15378"/>
        <dbReference type="ChEBI" id="CHEBI:43474"/>
        <dbReference type="ChEBI" id="CHEBI:57783"/>
        <dbReference type="ChEBI" id="CHEBI:58066"/>
        <dbReference type="ChEBI" id="CHEBI:58274"/>
        <dbReference type="ChEBI" id="CHEBI:58349"/>
        <dbReference type="EC" id="1.2.1.41"/>
    </reaction>
</comment>
<comment type="pathway">
    <text evidence="1">Amino-acid biosynthesis; L-proline biosynthesis; L-glutamate 5-semialdehyde from L-glutamate: step 2/2.</text>
</comment>
<comment type="subcellular location">
    <subcellularLocation>
        <location evidence="1">Cytoplasm</location>
    </subcellularLocation>
</comment>
<comment type="similarity">
    <text evidence="1">Belongs to the gamma-glutamyl phosphate reductase family.</text>
</comment>
<comment type="sequence caution" evidence="2">
    <conflict type="erroneous initiation">
        <sequence resource="EMBL-CDS" id="BAJ69490"/>
    </conflict>
    <text>Truncated N-terminus.</text>
</comment>
<reference key="1">
    <citation type="journal article" date="2008" name="Proc. Natl. Acad. Sci. U.S.A.">
        <title>The genome sequence of Bifidobacterium longum subsp. infantis reveals adaptations for milk utilization within the infant microbiome.</title>
        <authorList>
            <person name="Sela D.A."/>
            <person name="Chapman J."/>
            <person name="Adeuya A."/>
            <person name="Kim J.H."/>
            <person name="Chen F."/>
            <person name="Whitehead T.R."/>
            <person name="Lapidus A."/>
            <person name="Rokhsar D.S."/>
            <person name="Lebrilla C.B."/>
            <person name="German J.B."/>
            <person name="Price N.P."/>
            <person name="Richardson P.M."/>
            <person name="Mills D.A."/>
        </authorList>
    </citation>
    <scope>NUCLEOTIDE SEQUENCE [LARGE SCALE GENOMIC DNA]</scope>
    <source>
        <strain>ATCC 15697 / DSM 20088 / JCM 1222 / NCTC 11817 / S12</strain>
    </source>
</reference>
<reference key="2">
    <citation type="journal article" date="2011" name="Nature">
        <title>Bifidobacteria can protect from enteropathogenic infection through production of acetate.</title>
        <authorList>
            <person name="Fukuda S."/>
            <person name="Toh H."/>
            <person name="Hase K."/>
            <person name="Oshima K."/>
            <person name="Nakanishi Y."/>
            <person name="Yoshimura K."/>
            <person name="Tobe T."/>
            <person name="Clarke J.M."/>
            <person name="Topping D.L."/>
            <person name="Suzuki T."/>
            <person name="Taylor T.D."/>
            <person name="Itoh K."/>
            <person name="Kikuchi J."/>
            <person name="Morita H."/>
            <person name="Hattori M."/>
            <person name="Ohno H."/>
        </authorList>
    </citation>
    <scope>NUCLEOTIDE SEQUENCE [LARGE SCALE GENOMIC DNA]</scope>
    <source>
        <strain>ATCC 15697 / DSM 20088 / JCM 1222 / NCTC 11817 / S12</strain>
    </source>
</reference>
<name>PROA_BIFLS</name>
<gene>
    <name evidence="1" type="primary">proA</name>
    <name type="ordered locus">Blon_1846</name>
    <name type="ordered locus">BLIJ_1911</name>
</gene>
<organism>
    <name type="scientific">Bifidobacterium longum subsp. infantis (strain ATCC 15697 / DSM 20088 / JCM 1222 / NCTC 11817 / S12)</name>
    <dbReference type="NCBI Taxonomy" id="391904"/>
    <lineage>
        <taxon>Bacteria</taxon>
        <taxon>Bacillati</taxon>
        <taxon>Actinomycetota</taxon>
        <taxon>Actinomycetes</taxon>
        <taxon>Bifidobacteriales</taxon>
        <taxon>Bifidobacteriaceae</taxon>
        <taxon>Bifidobacterium</taxon>
    </lineage>
</organism>
<protein>
    <recommendedName>
        <fullName evidence="1">Gamma-glutamyl phosphate reductase</fullName>
        <shortName evidence="1">GPR</shortName>
        <ecNumber evidence="1">1.2.1.41</ecNumber>
    </recommendedName>
    <alternativeName>
        <fullName evidence="1">Glutamate-5-semialdehyde dehydrogenase</fullName>
    </alternativeName>
    <alternativeName>
        <fullName evidence="1">Glutamyl-gamma-semialdehyde dehydrogenase</fullName>
        <shortName evidence="1">GSA dehydrogenase</shortName>
    </alternativeName>
</protein>
<dbReference type="EC" id="1.2.1.41" evidence="1"/>
<dbReference type="EMBL" id="CP001095">
    <property type="protein sequence ID" value="ACJ52921.1"/>
    <property type="molecule type" value="Genomic_DNA"/>
</dbReference>
<dbReference type="EMBL" id="AP010889">
    <property type="protein sequence ID" value="BAJ69490.1"/>
    <property type="status" value="ALT_INIT"/>
    <property type="molecule type" value="Genomic_DNA"/>
</dbReference>
<dbReference type="RefSeq" id="WP_012578136.1">
    <property type="nucleotide sequence ID" value="NC_011593.1"/>
</dbReference>
<dbReference type="RefSeq" id="WP_041982066.1">
    <property type="nucleotide sequence ID" value="NC_017219.1"/>
</dbReference>
<dbReference type="SMR" id="B7GTL2"/>
<dbReference type="KEGG" id="bln:Blon_1846"/>
<dbReference type="KEGG" id="blon:BLIJ_1911"/>
<dbReference type="PATRIC" id="fig|391904.8.peg.1918"/>
<dbReference type="HOGENOM" id="CLU_030231_0_0_11"/>
<dbReference type="UniPathway" id="UPA00098">
    <property type="reaction ID" value="UER00360"/>
</dbReference>
<dbReference type="Proteomes" id="UP000001360">
    <property type="component" value="Chromosome"/>
</dbReference>
<dbReference type="GO" id="GO:0005737">
    <property type="term" value="C:cytoplasm"/>
    <property type="evidence" value="ECO:0007669"/>
    <property type="project" value="UniProtKB-SubCell"/>
</dbReference>
<dbReference type="GO" id="GO:0004350">
    <property type="term" value="F:glutamate-5-semialdehyde dehydrogenase activity"/>
    <property type="evidence" value="ECO:0007669"/>
    <property type="project" value="UniProtKB-UniRule"/>
</dbReference>
<dbReference type="GO" id="GO:0050661">
    <property type="term" value="F:NADP binding"/>
    <property type="evidence" value="ECO:0007669"/>
    <property type="project" value="InterPro"/>
</dbReference>
<dbReference type="GO" id="GO:0055129">
    <property type="term" value="P:L-proline biosynthetic process"/>
    <property type="evidence" value="ECO:0007669"/>
    <property type="project" value="UniProtKB-UniRule"/>
</dbReference>
<dbReference type="CDD" id="cd07079">
    <property type="entry name" value="ALDH_F18-19_ProA-GPR"/>
    <property type="match status" value="1"/>
</dbReference>
<dbReference type="FunFam" id="3.40.309.10:FF:000006">
    <property type="entry name" value="Gamma-glutamyl phosphate reductase"/>
    <property type="match status" value="1"/>
</dbReference>
<dbReference type="Gene3D" id="3.40.605.10">
    <property type="entry name" value="Aldehyde Dehydrogenase, Chain A, domain 1"/>
    <property type="match status" value="1"/>
</dbReference>
<dbReference type="Gene3D" id="3.40.309.10">
    <property type="entry name" value="Aldehyde Dehydrogenase, Chain A, domain 2"/>
    <property type="match status" value="1"/>
</dbReference>
<dbReference type="HAMAP" id="MF_00412">
    <property type="entry name" value="ProA"/>
    <property type="match status" value="1"/>
</dbReference>
<dbReference type="InterPro" id="IPR016161">
    <property type="entry name" value="Ald_DH/histidinol_DH"/>
</dbReference>
<dbReference type="InterPro" id="IPR016163">
    <property type="entry name" value="Ald_DH_C"/>
</dbReference>
<dbReference type="InterPro" id="IPR016162">
    <property type="entry name" value="Ald_DH_N"/>
</dbReference>
<dbReference type="InterPro" id="IPR015590">
    <property type="entry name" value="Aldehyde_DH_dom"/>
</dbReference>
<dbReference type="InterPro" id="IPR020593">
    <property type="entry name" value="G-glutamylP_reductase_CS"/>
</dbReference>
<dbReference type="InterPro" id="IPR012134">
    <property type="entry name" value="Glu-5-SA_DH"/>
</dbReference>
<dbReference type="InterPro" id="IPR000965">
    <property type="entry name" value="GPR_dom"/>
</dbReference>
<dbReference type="NCBIfam" id="NF001221">
    <property type="entry name" value="PRK00197.1"/>
    <property type="match status" value="1"/>
</dbReference>
<dbReference type="NCBIfam" id="TIGR00407">
    <property type="entry name" value="proA"/>
    <property type="match status" value="1"/>
</dbReference>
<dbReference type="PANTHER" id="PTHR11063:SF8">
    <property type="entry name" value="DELTA-1-PYRROLINE-5-CARBOXYLATE SYNTHASE"/>
    <property type="match status" value="1"/>
</dbReference>
<dbReference type="PANTHER" id="PTHR11063">
    <property type="entry name" value="GLUTAMATE SEMIALDEHYDE DEHYDROGENASE"/>
    <property type="match status" value="1"/>
</dbReference>
<dbReference type="Pfam" id="PF00171">
    <property type="entry name" value="Aldedh"/>
    <property type="match status" value="1"/>
</dbReference>
<dbReference type="PIRSF" id="PIRSF000151">
    <property type="entry name" value="GPR"/>
    <property type="match status" value="1"/>
</dbReference>
<dbReference type="SUPFAM" id="SSF53720">
    <property type="entry name" value="ALDH-like"/>
    <property type="match status" value="1"/>
</dbReference>
<dbReference type="PROSITE" id="PS01223">
    <property type="entry name" value="PROA"/>
    <property type="match status" value="1"/>
</dbReference>
<evidence type="ECO:0000255" key="1">
    <source>
        <dbReference type="HAMAP-Rule" id="MF_00412"/>
    </source>
</evidence>
<evidence type="ECO:0000305" key="2"/>
<sequence>MSDELSPEVFDAVCRQADQAARAQERLAQANTEAKNELLLAIADALDEHAADIEAANALDMLESKENGMDAGKLDRLLFDVPRVAAAAQGVRHVATLPDPVGEIVRGYNLPNGLRLTQTRVPMGVIGMIYEARPNVTVDVSSLCLKSGNAALLRGGHAAERTNAATLGVIAPVLEAHGFESTLVQSVDQYGRAGATAMMEARGHIDVLVPRGGAGLIQAVVRNSKVPVIETGAGNVHIYIDKSGDLAKAIPIIINAKTQRVGVCNAAEKLLVHKDVAAEFLPQIAAALAEANVVLQTDTTSYDIISGAAIEGLDLNHATEEDWDTEYLALKMGIKVVPDLDTAIDHINTHSTGHTESIIAEDYAAIEEFTKRIDSAVVVVNASTRFTDGGVFGFGAELGISTQKMHARGPMGLREMTTTKWIGYGTGQVRA</sequence>
<keyword id="KW-0028">Amino-acid biosynthesis</keyword>
<keyword id="KW-0963">Cytoplasm</keyword>
<keyword id="KW-0521">NADP</keyword>
<keyword id="KW-0560">Oxidoreductase</keyword>
<keyword id="KW-0641">Proline biosynthesis</keyword>
<proteinExistence type="inferred from homology"/>
<feature type="chain" id="PRO_1000193574" description="Gamma-glutamyl phosphate reductase">
    <location>
        <begin position="1"/>
        <end position="431"/>
    </location>
</feature>
<feature type="sequence conflict" description="In Ref. 1; ACJ52921." evidence="2" ref="1">
    <location>
        <begin position="84"/>
        <end position="93"/>
    </location>
</feature>